<organism>
    <name type="scientific">Oryza sativa subsp. indica</name>
    <name type="common">Rice</name>
    <dbReference type="NCBI Taxonomy" id="39946"/>
    <lineage>
        <taxon>Eukaryota</taxon>
        <taxon>Viridiplantae</taxon>
        <taxon>Streptophyta</taxon>
        <taxon>Embryophyta</taxon>
        <taxon>Tracheophyta</taxon>
        <taxon>Spermatophyta</taxon>
        <taxon>Magnoliopsida</taxon>
        <taxon>Liliopsida</taxon>
        <taxon>Poales</taxon>
        <taxon>Poaceae</taxon>
        <taxon>BOP clade</taxon>
        <taxon>Oryzoideae</taxon>
        <taxon>Oryzeae</taxon>
        <taxon>Oryzinae</taxon>
        <taxon>Oryza</taxon>
        <taxon>Oryza sativa</taxon>
    </lineage>
</organism>
<reference key="1">
    <citation type="journal article" date="2002" name="Nature">
        <title>Sequence and analysis of rice chromosome 4.</title>
        <authorList>
            <person name="Feng Q."/>
            <person name="Zhang Y."/>
            <person name="Hao P."/>
            <person name="Wang S."/>
            <person name="Fu G."/>
            <person name="Huang Y."/>
            <person name="Li Y."/>
            <person name="Zhu J."/>
            <person name="Liu Y."/>
            <person name="Hu X."/>
            <person name="Jia P."/>
            <person name="Zhang Y."/>
            <person name="Zhao Q."/>
            <person name="Ying K."/>
            <person name="Yu S."/>
            <person name="Tang Y."/>
            <person name="Weng Q."/>
            <person name="Zhang L."/>
            <person name="Lu Y."/>
            <person name="Mu J."/>
            <person name="Lu Y."/>
            <person name="Zhang L.S."/>
            <person name="Yu Z."/>
            <person name="Fan D."/>
            <person name="Liu X."/>
            <person name="Lu T."/>
            <person name="Li C."/>
            <person name="Wu Y."/>
            <person name="Sun T."/>
            <person name="Lei H."/>
            <person name="Li T."/>
            <person name="Hu H."/>
            <person name="Guan J."/>
            <person name="Wu M."/>
            <person name="Zhang R."/>
            <person name="Zhou B."/>
            <person name="Chen Z."/>
            <person name="Chen L."/>
            <person name="Jin Z."/>
            <person name="Wang R."/>
            <person name="Yin H."/>
            <person name="Cai Z."/>
            <person name="Ren S."/>
            <person name="Lv G."/>
            <person name="Gu W."/>
            <person name="Zhu G."/>
            <person name="Tu Y."/>
            <person name="Jia J."/>
            <person name="Zhang Y."/>
            <person name="Chen J."/>
            <person name="Kang H."/>
            <person name="Chen X."/>
            <person name="Shao C."/>
            <person name="Sun Y."/>
            <person name="Hu Q."/>
            <person name="Zhang X."/>
            <person name="Zhang W."/>
            <person name="Wang L."/>
            <person name="Ding C."/>
            <person name="Sheng H."/>
            <person name="Gu J."/>
            <person name="Chen S."/>
            <person name="Ni L."/>
            <person name="Zhu F."/>
            <person name="Chen W."/>
            <person name="Lan L."/>
            <person name="Lai Y."/>
            <person name="Cheng Z."/>
            <person name="Gu M."/>
            <person name="Jiang J."/>
            <person name="Li J."/>
            <person name="Hong G."/>
            <person name="Xue Y."/>
            <person name="Han B."/>
        </authorList>
    </citation>
    <scope>NUCLEOTIDE SEQUENCE [LARGE SCALE GENOMIC DNA]</scope>
    <source>
        <strain>cv. Guang-Lu-Ai No.4</strain>
    </source>
</reference>
<reference key="2">
    <citation type="journal article" date="2005" name="PLoS Biol.">
        <title>The genomes of Oryza sativa: a history of duplications.</title>
        <authorList>
            <person name="Yu J."/>
            <person name="Wang J."/>
            <person name="Lin W."/>
            <person name="Li S."/>
            <person name="Li H."/>
            <person name="Zhou J."/>
            <person name="Ni P."/>
            <person name="Dong W."/>
            <person name="Hu S."/>
            <person name="Zeng C."/>
            <person name="Zhang J."/>
            <person name="Zhang Y."/>
            <person name="Li R."/>
            <person name="Xu Z."/>
            <person name="Li S."/>
            <person name="Li X."/>
            <person name="Zheng H."/>
            <person name="Cong L."/>
            <person name="Lin L."/>
            <person name="Yin J."/>
            <person name="Geng J."/>
            <person name="Li G."/>
            <person name="Shi J."/>
            <person name="Liu J."/>
            <person name="Lv H."/>
            <person name="Li J."/>
            <person name="Wang J."/>
            <person name="Deng Y."/>
            <person name="Ran L."/>
            <person name="Shi X."/>
            <person name="Wang X."/>
            <person name="Wu Q."/>
            <person name="Li C."/>
            <person name="Ren X."/>
            <person name="Wang J."/>
            <person name="Wang X."/>
            <person name="Li D."/>
            <person name="Liu D."/>
            <person name="Zhang X."/>
            <person name="Ji Z."/>
            <person name="Zhao W."/>
            <person name="Sun Y."/>
            <person name="Zhang Z."/>
            <person name="Bao J."/>
            <person name="Han Y."/>
            <person name="Dong L."/>
            <person name="Ji J."/>
            <person name="Chen P."/>
            <person name="Wu S."/>
            <person name="Liu J."/>
            <person name="Xiao Y."/>
            <person name="Bu D."/>
            <person name="Tan J."/>
            <person name="Yang L."/>
            <person name="Ye C."/>
            <person name="Zhang J."/>
            <person name="Xu J."/>
            <person name="Zhou Y."/>
            <person name="Yu Y."/>
            <person name="Zhang B."/>
            <person name="Zhuang S."/>
            <person name="Wei H."/>
            <person name="Liu B."/>
            <person name="Lei M."/>
            <person name="Yu H."/>
            <person name="Li Y."/>
            <person name="Xu H."/>
            <person name="Wei S."/>
            <person name="He X."/>
            <person name="Fang L."/>
            <person name="Zhang Z."/>
            <person name="Zhang Y."/>
            <person name="Huang X."/>
            <person name="Su Z."/>
            <person name="Tong W."/>
            <person name="Li J."/>
            <person name="Tong Z."/>
            <person name="Li S."/>
            <person name="Ye J."/>
            <person name="Wang L."/>
            <person name="Fang L."/>
            <person name="Lei T."/>
            <person name="Chen C.-S."/>
            <person name="Chen H.-C."/>
            <person name="Xu Z."/>
            <person name="Li H."/>
            <person name="Huang H."/>
            <person name="Zhang F."/>
            <person name="Xu H."/>
            <person name="Li N."/>
            <person name="Zhao C."/>
            <person name="Li S."/>
            <person name="Dong L."/>
            <person name="Huang Y."/>
            <person name="Li L."/>
            <person name="Xi Y."/>
            <person name="Qi Q."/>
            <person name="Li W."/>
            <person name="Zhang B."/>
            <person name="Hu W."/>
            <person name="Zhang Y."/>
            <person name="Tian X."/>
            <person name="Jiao Y."/>
            <person name="Liang X."/>
            <person name="Jin J."/>
            <person name="Gao L."/>
            <person name="Zheng W."/>
            <person name="Hao B."/>
            <person name="Liu S.-M."/>
            <person name="Wang W."/>
            <person name="Yuan L."/>
            <person name="Cao M."/>
            <person name="McDermott J."/>
            <person name="Samudrala R."/>
            <person name="Wang J."/>
            <person name="Wong G.K.-S."/>
            <person name="Yang H."/>
        </authorList>
    </citation>
    <scope>NUCLEOTIDE SEQUENCE [LARGE SCALE GENOMIC DNA]</scope>
    <source>
        <strain>cv. 93-11</strain>
    </source>
</reference>
<protein>
    <recommendedName>
        <fullName>Probable protein-S-isoprenylcysteine O-methyltransferase</fullName>
        <ecNumber>2.1.1.100</ecNumber>
    </recommendedName>
    <alternativeName>
        <fullName>Isoprenylcysteine carboxylmethyltransferase</fullName>
    </alternativeName>
    <alternativeName>
        <fullName>Prenylated protein carboxyl methyltransferase</fullName>
    </alternativeName>
    <alternativeName>
        <fullName>Prenylcysteine carboxyl methyltransferase</fullName>
    </alternativeName>
</protein>
<dbReference type="EC" id="2.1.1.100"/>
<dbReference type="EMBL" id="CR855228">
    <property type="protein sequence ID" value="CAH67871.1"/>
    <property type="molecule type" value="Genomic_DNA"/>
</dbReference>
<dbReference type="EMBL" id="CM000129">
    <property type="status" value="NOT_ANNOTATED_CDS"/>
    <property type="molecule type" value="Genomic_DNA"/>
</dbReference>
<dbReference type="SMR" id="A2XX73"/>
<dbReference type="STRING" id="39946.A2XX73"/>
<dbReference type="EnsemblPlants" id="BGIOSGA017059-TA">
    <property type="protein sequence ID" value="BGIOSGA017059-PA"/>
    <property type="gene ID" value="BGIOSGA017059"/>
</dbReference>
<dbReference type="EnsemblPlants" id="OsLaMu_04g0025770.01">
    <property type="protein sequence ID" value="OsLaMu_04g0025770.01"/>
    <property type="gene ID" value="OsLaMu_04g0025770"/>
</dbReference>
<dbReference type="Gramene" id="BGIOSGA017059-TA">
    <property type="protein sequence ID" value="BGIOSGA017059-PA"/>
    <property type="gene ID" value="BGIOSGA017059"/>
</dbReference>
<dbReference type="Gramene" id="OsLaMu_04g0025770.01">
    <property type="protein sequence ID" value="OsLaMu_04g0025770.01"/>
    <property type="gene ID" value="OsLaMu_04g0025770"/>
</dbReference>
<dbReference type="HOGENOM" id="CLU_065200_0_2_1"/>
<dbReference type="OMA" id="IKREEAY"/>
<dbReference type="OrthoDB" id="421276at2759"/>
<dbReference type="Proteomes" id="UP000007015">
    <property type="component" value="Chromosome 4"/>
</dbReference>
<dbReference type="GO" id="GO:0005789">
    <property type="term" value="C:endoplasmic reticulum membrane"/>
    <property type="evidence" value="ECO:0007669"/>
    <property type="project" value="UniProtKB-SubCell"/>
</dbReference>
<dbReference type="GO" id="GO:0004671">
    <property type="term" value="F:protein C-terminal S-isoprenylcysteine carboxyl O-methyltransferase activity"/>
    <property type="evidence" value="ECO:0007669"/>
    <property type="project" value="UniProtKB-EC"/>
</dbReference>
<dbReference type="GO" id="GO:0032259">
    <property type="term" value="P:methylation"/>
    <property type="evidence" value="ECO:0007669"/>
    <property type="project" value="UniProtKB-KW"/>
</dbReference>
<dbReference type="Gene3D" id="1.20.120.1630">
    <property type="match status" value="1"/>
</dbReference>
<dbReference type="InterPro" id="IPR007269">
    <property type="entry name" value="ICMT_MeTrfase"/>
</dbReference>
<dbReference type="InterPro" id="IPR025770">
    <property type="entry name" value="PPMT_MeTrfase"/>
</dbReference>
<dbReference type="PANTHER" id="PTHR12714">
    <property type="entry name" value="PROTEIN-S ISOPRENYLCYSTEINE O-METHYLTRANSFERASE"/>
    <property type="match status" value="1"/>
</dbReference>
<dbReference type="PANTHER" id="PTHR12714:SF9">
    <property type="entry name" value="PROTEIN-S-ISOPRENYLCYSTEINE O-METHYLTRANSFERASE"/>
    <property type="match status" value="1"/>
</dbReference>
<dbReference type="Pfam" id="PF04140">
    <property type="entry name" value="ICMT"/>
    <property type="match status" value="1"/>
</dbReference>
<dbReference type="PROSITE" id="PS51564">
    <property type="entry name" value="SAM_ICMT"/>
    <property type="match status" value="1"/>
</dbReference>
<comment type="function">
    <text evidence="1">Catalyzes the post-translational methylation of isoprenylated C-terminal cysteine residues. Carboxyl methylation is a reversible and potentially regulated step in the post-translational modification of prenylated proteins (By similarity).</text>
</comment>
<comment type="catalytic activity">
    <reaction>
        <text>[protein]-C-terminal S-[(2E,6E)-farnesyl]-L-cysteine + S-adenosyl-L-methionine = [protein]-C-terminal S-[(2E,6E)-farnesyl]-L-cysteine methyl ester + S-adenosyl-L-homocysteine</text>
        <dbReference type="Rhea" id="RHEA:21672"/>
        <dbReference type="Rhea" id="RHEA-COMP:12125"/>
        <dbReference type="Rhea" id="RHEA-COMP:12126"/>
        <dbReference type="ChEBI" id="CHEBI:57856"/>
        <dbReference type="ChEBI" id="CHEBI:59789"/>
        <dbReference type="ChEBI" id="CHEBI:90510"/>
        <dbReference type="ChEBI" id="CHEBI:90511"/>
        <dbReference type="EC" id="2.1.1.100"/>
    </reaction>
</comment>
<comment type="cofactor">
    <cofactor evidence="1">
        <name>Zn(2+)</name>
        <dbReference type="ChEBI" id="CHEBI:29105"/>
    </cofactor>
    <text evidence="1">Divalent metal cations. Probably Zn(2+).</text>
</comment>
<comment type="subcellular location">
    <subcellularLocation>
        <location evidence="1">Endoplasmic reticulum membrane</location>
        <topology evidence="1">Multi-pass membrane protein</topology>
    </subcellularLocation>
</comment>
<comment type="similarity">
    <text evidence="5">Belongs to the class VI-like SAM-binding methyltransferase superfamily. Isoprenylcysteine carboxyl methyltransferase family.</text>
</comment>
<gene>
    <name type="primary">ICMT</name>
    <name type="ORF">B0403H10-OSIGBa0105A11.23</name>
    <name type="ORF">OsI_016666</name>
</gene>
<accession>A2XX73</accession>
<accession>Q01HS5</accession>
<proteinExistence type="inferred from homology"/>
<name>ICMT_ORYSI</name>
<sequence length="191" mass="22071">MAARAQAWLFAAALVIFHGSEYVLAAAFHGRRNVTATSLLISKQYVLAMSFAMLEHLTEALLFPELKEYWFVSYVGLVMVIIGEVIRKLAVVTAGRSFTHVIRIHYEDQHKLITHGVYRLMRHPGYSGFLIWAVGTQVMLCNPLSTVAFTLVLWRFFSKRIPYEEFFLRQFFGREYEEYAQKVHSGLPFIE</sequence>
<keyword id="KW-0256">Endoplasmic reticulum</keyword>
<keyword id="KW-0472">Membrane</keyword>
<keyword id="KW-0489">Methyltransferase</keyword>
<keyword id="KW-1185">Reference proteome</keyword>
<keyword id="KW-0949">S-adenosyl-L-methionine</keyword>
<keyword id="KW-0808">Transferase</keyword>
<keyword id="KW-0812">Transmembrane</keyword>
<keyword id="KW-1133">Transmembrane helix</keyword>
<evidence type="ECO:0000250" key="1"/>
<evidence type="ECO:0000250" key="2">
    <source>
        <dbReference type="UniProtKB" id="D6WJ77"/>
    </source>
</evidence>
<evidence type="ECO:0000250" key="3">
    <source>
        <dbReference type="UniProtKB" id="Q8TMG0"/>
    </source>
</evidence>
<evidence type="ECO:0000255" key="4"/>
<evidence type="ECO:0000305" key="5"/>
<feature type="chain" id="PRO_0000356252" description="Probable protein-S-isoprenylcysteine O-methyltransferase">
    <location>
        <begin position="1"/>
        <end position="191"/>
    </location>
</feature>
<feature type="transmembrane region" description="Helical" evidence="4">
    <location>
        <begin position="8"/>
        <end position="28"/>
    </location>
</feature>
<feature type="transmembrane region" description="Helical" evidence="4">
    <location>
        <begin position="45"/>
        <end position="65"/>
    </location>
</feature>
<feature type="transmembrane region" description="Helical" evidence="4">
    <location>
        <begin position="66"/>
        <end position="86"/>
    </location>
</feature>
<feature type="transmembrane region" description="Helical" evidence="4">
    <location>
        <begin position="129"/>
        <end position="149"/>
    </location>
</feature>
<feature type="binding site" evidence="3">
    <location>
        <begin position="110"/>
        <end position="113"/>
    </location>
    <ligand>
        <name>S-adenosyl-L-methionine</name>
        <dbReference type="ChEBI" id="CHEBI:59789"/>
    </ligand>
</feature>
<feature type="binding site" evidence="3">
    <location>
        <position position="118"/>
    </location>
    <ligand>
        <name>S-adenosyl-L-methionine</name>
        <dbReference type="ChEBI" id="CHEBI:59789"/>
    </ligand>
</feature>
<feature type="binding site" evidence="3">
    <location>
        <begin position="123"/>
        <end position="126"/>
    </location>
    <ligand>
        <name>S-adenosyl-L-methionine</name>
        <dbReference type="ChEBI" id="CHEBI:59789"/>
    </ligand>
</feature>
<feature type="binding site" evidence="2">
    <location>
        <position position="160"/>
    </location>
    <ligand>
        <name>substrate</name>
    </ligand>
</feature>
<feature type="binding site" evidence="3">
    <location>
        <position position="164"/>
    </location>
    <ligand>
        <name>S-adenosyl-L-methionine</name>
        <dbReference type="ChEBI" id="CHEBI:59789"/>
    </ligand>
</feature>